<name>YHE2_YEAST</name>
<protein>
    <recommendedName>
        <fullName>Putative uncharacterized protein YHL042W</fullName>
    </recommendedName>
</protein>
<feature type="signal peptide" evidence="1">
    <location>
        <begin position="1"/>
        <end position="39"/>
    </location>
</feature>
<feature type="chain" id="PRO_0000014324" description="Putative uncharacterized protein YHL042W">
    <location>
        <begin position="40"/>
        <end position="150"/>
    </location>
</feature>
<accession>P38729</accession>
<accession>D3DKS8</accession>
<evidence type="ECO:0000255" key="1"/>
<reference key="1">
    <citation type="journal article" date="1994" name="Science">
        <title>Complete nucleotide sequence of Saccharomyces cerevisiae chromosome VIII.</title>
        <authorList>
            <person name="Johnston M."/>
            <person name="Andrews S."/>
            <person name="Brinkman R."/>
            <person name="Cooper J."/>
            <person name="Ding H."/>
            <person name="Dover J."/>
            <person name="Du Z."/>
            <person name="Favello A."/>
            <person name="Fulton L."/>
            <person name="Gattung S."/>
            <person name="Geisel C."/>
            <person name="Kirsten J."/>
            <person name="Kucaba T."/>
            <person name="Hillier L.W."/>
            <person name="Jier M."/>
            <person name="Johnston L."/>
            <person name="Langston Y."/>
            <person name="Latreille P."/>
            <person name="Louis E.J."/>
            <person name="Macri C."/>
            <person name="Mardis E."/>
            <person name="Menezes S."/>
            <person name="Mouser L."/>
            <person name="Nhan M."/>
            <person name="Rifkin L."/>
            <person name="Riles L."/>
            <person name="St Peter H."/>
            <person name="Trevaskis E."/>
            <person name="Vaughan K."/>
            <person name="Vignati D."/>
            <person name="Wilcox L."/>
            <person name="Wohldman P."/>
            <person name="Waterston R."/>
            <person name="Wilson R."/>
            <person name="Vaudin M."/>
        </authorList>
    </citation>
    <scope>NUCLEOTIDE SEQUENCE [LARGE SCALE GENOMIC DNA]</scope>
    <source>
        <strain>ATCC 204508 / S288c</strain>
    </source>
</reference>
<reference key="2">
    <citation type="journal article" date="2014" name="G3 (Bethesda)">
        <title>The reference genome sequence of Saccharomyces cerevisiae: Then and now.</title>
        <authorList>
            <person name="Engel S.R."/>
            <person name="Dietrich F.S."/>
            <person name="Fisk D.G."/>
            <person name="Binkley G."/>
            <person name="Balakrishnan R."/>
            <person name="Costanzo M.C."/>
            <person name="Dwight S.S."/>
            <person name="Hitz B.C."/>
            <person name="Karra K."/>
            <person name="Nash R.S."/>
            <person name="Weng S."/>
            <person name="Wong E.D."/>
            <person name="Lloyd P."/>
            <person name="Skrzypek M.S."/>
            <person name="Miyasato S.R."/>
            <person name="Simison M."/>
            <person name="Cherry J.M."/>
        </authorList>
    </citation>
    <scope>GENOME REANNOTATION</scope>
    <source>
        <strain>ATCC 204508 / S288c</strain>
    </source>
</reference>
<reference key="3">
    <citation type="journal article" date="2007" name="Genome Res.">
        <title>Approaching a complete repository of sequence-verified protein-encoding clones for Saccharomyces cerevisiae.</title>
        <authorList>
            <person name="Hu Y."/>
            <person name="Rolfs A."/>
            <person name="Bhullar B."/>
            <person name="Murthy T.V.S."/>
            <person name="Zhu C."/>
            <person name="Berger M.F."/>
            <person name="Camargo A.A."/>
            <person name="Kelley F."/>
            <person name="McCarron S."/>
            <person name="Jepson D."/>
            <person name="Richardson A."/>
            <person name="Raphael J."/>
            <person name="Moreira D."/>
            <person name="Taycher E."/>
            <person name="Zuo D."/>
            <person name="Mohr S."/>
            <person name="Kane M.F."/>
            <person name="Williamson J."/>
            <person name="Simpson A.J.G."/>
            <person name="Bulyk M.L."/>
            <person name="Harlow E."/>
            <person name="Marsischky G."/>
            <person name="Kolodner R.D."/>
            <person name="LaBaer J."/>
        </authorList>
    </citation>
    <scope>NUCLEOTIDE SEQUENCE [GENOMIC DNA]</scope>
    <source>
        <strain>ATCC 204508 / S288c</strain>
    </source>
</reference>
<keyword id="KW-1185">Reference proteome</keyword>
<keyword id="KW-0732">Signal</keyword>
<gene>
    <name type="ordered locus">YHL042W</name>
</gene>
<organism>
    <name type="scientific">Saccharomyces cerevisiae (strain ATCC 204508 / S288c)</name>
    <name type="common">Baker's yeast</name>
    <dbReference type="NCBI Taxonomy" id="559292"/>
    <lineage>
        <taxon>Eukaryota</taxon>
        <taxon>Fungi</taxon>
        <taxon>Dikarya</taxon>
        <taxon>Ascomycota</taxon>
        <taxon>Saccharomycotina</taxon>
        <taxon>Saccharomycetes</taxon>
        <taxon>Saccharomycetales</taxon>
        <taxon>Saccharomycetaceae</taxon>
        <taxon>Saccharomyces</taxon>
    </lineage>
</organism>
<sequence length="150" mass="17570">MKQRFSQVATVIFFVMSIRSPRNLGFFFTLALFVVLVCSQEWFSFEMNRSCSMKVEHRMQFLSTIISEHQKSDVNCWDQIAKKMNVYLFEQKVSGSDVFFLDGADCERFFERNFLRYLPSRKSSHPDLPIAELLPYIRKADIACAGKQLI</sequence>
<proteinExistence type="inferred from homology"/>
<dbReference type="EMBL" id="U11583">
    <property type="protein sequence ID" value="AAB65054.1"/>
    <property type="molecule type" value="Genomic_DNA"/>
</dbReference>
<dbReference type="EMBL" id="AY558386">
    <property type="protein sequence ID" value="AAS56712.1"/>
    <property type="molecule type" value="Genomic_DNA"/>
</dbReference>
<dbReference type="EMBL" id="BK006934">
    <property type="protein sequence ID" value="DAA06645.1"/>
    <property type="molecule type" value="Genomic_DNA"/>
</dbReference>
<dbReference type="PIR" id="S48926">
    <property type="entry name" value="S48926"/>
</dbReference>
<dbReference type="RefSeq" id="NP_011821.1">
    <property type="nucleotide sequence ID" value="NM_001179122.1"/>
</dbReference>
<dbReference type="BioGRID" id="36382">
    <property type="interactions" value="142"/>
</dbReference>
<dbReference type="DIP" id="DIP-1560N"/>
<dbReference type="FunCoup" id="P38729">
    <property type="interactions" value="73"/>
</dbReference>
<dbReference type="IntAct" id="P38729">
    <property type="interactions" value="7"/>
</dbReference>
<dbReference type="MINT" id="P38729"/>
<dbReference type="STRING" id="4932.YHL042W"/>
<dbReference type="PaxDb" id="4932-YHL042W"/>
<dbReference type="EnsemblFungi" id="YHL042W_mRNA">
    <property type="protein sequence ID" value="YHL042W"/>
    <property type="gene ID" value="YHL042W"/>
</dbReference>
<dbReference type="GeneID" id="856343"/>
<dbReference type="KEGG" id="sce:YHL042W"/>
<dbReference type="AGR" id="SGD:S000001034"/>
<dbReference type="SGD" id="S000001034">
    <property type="gene designation" value="YHL042W"/>
</dbReference>
<dbReference type="VEuPathDB" id="FungiDB:YHL042W"/>
<dbReference type="GeneTree" id="ENSGT00940000176283"/>
<dbReference type="HOGENOM" id="CLU_137531_0_0_1"/>
<dbReference type="InParanoid" id="P38729"/>
<dbReference type="OrthoDB" id="4047445at2759"/>
<dbReference type="BioCyc" id="YEAST:G3O-31059-MONOMER"/>
<dbReference type="BioGRID-ORCS" id="856343">
    <property type="hits" value="0 hits in 10 CRISPR screens"/>
</dbReference>
<dbReference type="PRO" id="PR:P38729"/>
<dbReference type="Proteomes" id="UP000002311">
    <property type="component" value="Chromosome VIII"/>
</dbReference>
<dbReference type="RNAct" id="P38729">
    <property type="molecule type" value="protein"/>
</dbReference>
<dbReference type="GO" id="GO:0005783">
    <property type="term" value="C:endoplasmic reticulum"/>
    <property type="evidence" value="ECO:0000314"/>
    <property type="project" value="SGD"/>
</dbReference>
<dbReference type="GO" id="GO:0000324">
    <property type="term" value="C:fungal-type vacuole"/>
    <property type="evidence" value="ECO:0007005"/>
    <property type="project" value="SGD"/>
</dbReference>
<dbReference type="InterPro" id="IPR001142">
    <property type="entry name" value="DUP/COS"/>
</dbReference>
<dbReference type="Pfam" id="PF00674">
    <property type="entry name" value="DUP"/>
    <property type="match status" value="1"/>
</dbReference>